<keyword id="KW-1035">Host cytoplasm</keyword>
<keyword id="KW-1043">Host membrane</keyword>
<keyword id="KW-0945">Host-virus interaction</keyword>
<keyword id="KW-1090">Inhibition of host innate immune response by virus</keyword>
<keyword id="KW-0472">Membrane</keyword>
<keyword id="KW-0812">Transmembrane</keyword>
<keyword id="KW-1133">Transmembrane helix</keyword>
<keyword id="KW-0899">Viral immunoevasion</keyword>
<feature type="chain" id="PRO_0000448382" description="Protein UL42">
    <location>
        <begin position="1"/>
        <end position="122"/>
    </location>
</feature>
<feature type="transmembrane region" description="Helical" evidence="3">
    <location>
        <begin position="89"/>
        <end position="109"/>
    </location>
</feature>
<feature type="region of interest" description="Disordered" evidence="4">
    <location>
        <begin position="1"/>
        <end position="47"/>
    </location>
</feature>
<feature type="short sequence motif" description="PPXY motif" evidence="5">
    <location>
        <begin position="16"/>
        <end position="19"/>
    </location>
</feature>
<feature type="short sequence motif" description="PPXY motif" evidence="5">
    <location>
        <begin position="42"/>
        <end position="45"/>
    </location>
</feature>
<feature type="compositionally biased region" description="Pro residues" evidence="4">
    <location>
        <begin position="32"/>
        <end position="47"/>
    </location>
</feature>
<feature type="mutagenesis site" description="Complete loss of interaction with host ITCH; when associated with A-45." evidence="5">
    <original>Y</original>
    <variation>A</variation>
    <location>
        <position position="19"/>
    </location>
</feature>
<feature type="mutagenesis site" description="Complete loss of interaction with host ITCH; when associated with A-19." evidence="5">
    <original>Y</original>
    <variation>A</variation>
    <location>
        <position position="45"/>
    </location>
</feature>
<reference key="1">
    <citation type="submission" date="2010-03" db="EMBL/GenBank/DDBJ databases">
        <title>Human cytomegalovirus RL11 gene family: variation, recombination and transcription.</title>
        <authorList>
            <person name="Davison A.J."/>
        </authorList>
    </citation>
    <scope>NUCLEOTIDE SEQUENCE [LARGE SCALE GENOMIC DNA]</scope>
    <source>
        <strain evidence="8">CINCY/Towne</strain>
    </source>
</reference>
<reference key="2">
    <citation type="journal article" date="2018" name="Sci. Rep.">
        <title>Herpesviruses possess conserved proteins for interaction with Nedd4 family ubiquitin E3 ligases.</title>
        <authorList>
            <person name="Koshizuka T."/>
            <person name="Kobayashi T."/>
            <person name="Ishioka K."/>
            <person name="Suzutani T."/>
        </authorList>
    </citation>
    <scope>INTERACTION WITH HOST ITCH</scope>
    <scope>DOMAIN</scope>
    <scope>MUTAGENESIS OF TYR-19 AND TYR-45</scope>
</reference>
<reference key="3">
    <citation type="journal article" date="2021" name="Microbiol. Immunol.">
        <title>Human cytomegalovirus UL42 protein inhibits the degradation of glycoprotein B through inhibition of Nedd4 family ubiquitin E3 ligases.</title>
        <authorList>
            <person name="Koshizuka T."/>
            <person name="Kondo H."/>
            <person name="Kato H."/>
            <person name="Takahashi K."/>
        </authorList>
    </citation>
    <scope>FUNCTION</scope>
    <scope>DISRUPTION PHENOTYPE</scope>
</reference>
<sequence length="122" mass="13355">MEPTPMLRDRDHDDAPPTYEQAMGLCPTTVSTPPPPPPDCSPPPYRPPYCLVSSPSPRHTFDMDMMEMPATMHPTTGAYFDNGWKWTFALLVVAILGIIFLAVVFTVVINRDNSTATGTSSG</sequence>
<organism>
    <name type="scientific">Human cytomegalovirus (strain Towne)</name>
    <name type="common">HHV-5</name>
    <name type="synonym">Human herpesvirus 5</name>
    <dbReference type="NCBI Taxonomy" id="10363"/>
    <lineage>
        <taxon>Viruses</taxon>
        <taxon>Duplodnaviria</taxon>
        <taxon>Heunggongvirae</taxon>
        <taxon>Peploviricota</taxon>
        <taxon>Herviviricetes</taxon>
        <taxon>Herpesvirales</taxon>
        <taxon>Orthoherpesviridae</taxon>
        <taxon>Betaherpesvirinae</taxon>
        <taxon>Cytomegalovirus</taxon>
        <taxon>Cytomegalovirus humanbeta5</taxon>
        <taxon>Human cytomegalovirus</taxon>
    </lineage>
</organism>
<gene>
    <name type="primary">UL42</name>
</gene>
<accession>D5LX53</accession>
<name>UL42_HCMVT</name>
<protein>
    <recommendedName>
        <fullName>Protein UL42</fullName>
    </recommendedName>
</protein>
<comment type="function">
    <text evidence="2 6">Plays a role in the inhibition of host innate immune response to promote latent infection. Mechanistically, suppresses viral DNA-triggered signaling by impairing DNA binding and oligomerization of CGAS. Also impairs the translocation of host STING1 from the endoplasmic reticulum to perinuclear punctate structures which is an essential step for its activation (By similarity). Regulates the function of host NEDD4 family ubiquitin E3 ligases through its PPxY motif and thereby prevents the excessive ubiquitination of gB and its degradation by inhibiting these E3 ligases (PubMed:34260096).</text>
</comment>
<comment type="subunit">
    <text evidence="2 5">Interacts with host ITCH; this interaction induces the ubiquitination and subsequent degradation of ITCH (PubMed:29535361). Interacts with host STING1 (By similarity). Interacts with CGAS (By similarity).</text>
</comment>
<comment type="subcellular location">
    <subcellularLocation>
        <location evidence="1">Host membrane</location>
        <topology evidence="1">Single-pass membrane protein</topology>
    </subcellularLocation>
    <subcellularLocation>
        <location evidence="1">Host cytoplasm</location>
    </subcellularLocation>
    <text evidence="1">Accumulates in the perinuclear region of the host cytoplasm, with some dispersal into the cytoplasm in a fine-speckled pattern.</text>
</comment>
<comment type="domain">
    <text evidence="5">Late-budding domains (L domains) are short sequence motifs essential for viral particle budding. They recruit proteins of the host ESCRT machinery (Endosomal Sorting Complex Required for Transport) or ESCRT-associated proteins. Contains one L domain: a PPXY motif which is involved in the interaction with Itch, a member of the Nedd4 family.</text>
</comment>
<comment type="disruption phenotype">
    <text evidence="6">In the absence of functional UL42, a significant amount of gB interacts with host ITCH leading to gB ubiquitination and degradation.</text>
</comment>
<comment type="similarity">
    <text evidence="7">Belongs to the Cytomegalovirus UL42 protein family.</text>
</comment>
<dbReference type="EMBL" id="GU980198">
    <property type="protein sequence ID" value="ADE88049.1"/>
    <property type="molecule type" value="Genomic_DNA"/>
</dbReference>
<dbReference type="SMR" id="D5LX53"/>
<dbReference type="Proteomes" id="UP000149703">
    <property type="component" value="Segment"/>
</dbReference>
<dbReference type="GO" id="GO:0030430">
    <property type="term" value="C:host cell cytoplasm"/>
    <property type="evidence" value="ECO:0007669"/>
    <property type="project" value="UniProtKB-SubCell"/>
</dbReference>
<dbReference type="GO" id="GO:0033644">
    <property type="term" value="C:host cell membrane"/>
    <property type="evidence" value="ECO:0007669"/>
    <property type="project" value="UniProtKB-SubCell"/>
</dbReference>
<dbReference type="GO" id="GO:0016020">
    <property type="term" value="C:membrane"/>
    <property type="evidence" value="ECO:0007669"/>
    <property type="project" value="UniProtKB-KW"/>
</dbReference>
<dbReference type="GO" id="GO:0075071">
    <property type="term" value="P:symbiont-mediated perturbation of host autophagy"/>
    <property type="evidence" value="ECO:0000269"/>
    <property type="project" value="SigSci"/>
</dbReference>
<dbReference type="GO" id="GO:0052170">
    <property type="term" value="P:symbiont-mediated suppression of host innate immune response"/>
    <property type="evidence" value="ECO:0007669"/>
    <property type="project" value="UniProtKB-KW"/>
</dbReference>
<dbReference type="InterPro" id="IPR035110">
    <property type="entry name" value="UL42"/>
</dbReference>
<dbReference type="Pfam" id="PF17638">
    <property type="entry name" value="UL42"/>
    <property type="match status" value="1"/>
</dbReference>
<organismHost>
    <name type="scientific">Homo sapiens</name>
    <name type="common">Human</name>
    <dbReference type="NCBI Taxonomy" id="9606"/>
</organismHost>
<evidence type="ECO:0000250" key="1">
    <source>
        <dbReference type="UniProtKB" id="F5HHZ3"/>
    </source>
</evidence>
<evidence type="ECO:0000250" key="2">
    <source>
        <dbReference type="UniProtKB" id="P16815"/>
    </source>
</evidence>
<evidence type="ECO:0000255" key="3"/>
<evidence type="ECO:0000256" key="4">
    <source>
        <dbReference type="SAM" id="MobiDB-lite"/>
    </source>
</evidence>
<evidence type="ECO:0000269" key="5">
    <source>
    </source>
</evidence>
<evidence type="ECO:0000269" key="6">
    <source>
    </source>
</evidence>
<evidence type="ECO:0000305" key="7"/>
<evidence type="ECO:0000312" key="8">
    <source>
        <dbReference type="EMBL" id="ADE88049.1"/>
    </source>
</evidence>
<proteinExistence type="evidence at protein level"/>